<feature type="chain" id="PRO_1000203284" description="Iron-sulfur cluster assembly protein CyaY">
    <location>
        <begin position="1"/>
        <end position="110"/>
    </location>
</feature>
<proteinExistence type="inferred from homology"/>
<reference key="1">
    <citation type="journal article" date="2009" name="J. Bacteriol.">
        <title>Genome sequence of Azotobacter vinelandii, an obligate aerobe specialized to support diverse anaerobic metabolic processes.</title>
        <authorList>
            <person name="Setubal J.C."/>
            <person name="Dos Santos P."/>
            <person name="Goldman B.S."/>
            <person name="Ertesvaag H."/>
            <person name="Espin G."/>
            <person name="Rubio L.M."/>
            <person name="Valla S."/>
            <person name="Almeida N.F."/>
            <person name="Balasubramanian D."/>
            <person name="Cromes L."/>
            <person name="Curatti L."/>
            <person name="Du Z."/>
            <person name="Godsy E."/>
            <person name="Goodner B."/>
            <person name="Hellner-Burris K."/>
            <person name="Hernandez J.A."/>
            <person name="Houmiel K."/>
            <person name="Imperial J."/>
            <person name="Kennedy C."/>
            <person name="Larson T.J."/>
            <person name="Latreille P."/>
            <person name="Ligon L.S."/>
            <person name="Lu J."/>
            <person name="Maerk M."/>
            <person name="Miller N.M."/>
            <person name="Norton S."/>
            <person name="O'Carroll I.P."/>
            <person name="Paulsen I."/>
            <person name="Raulfs E.C."/>
            <person name="Roemer R."/>
            <person name="Rosser J."/>
            <person name="Segura D."/>
            <person name="Slater S."/>
            <person name="Stricklin S.L."/>
            <person name="Studholme D.J."/>
            <person name="Sun J."/>
            <person name="Viana C.J."/>
            <person name="Wallin E."/>
            <person name="Wang B."/>
            <person name="Wheeler C."/>
            <person name="Zhu H."/>
            <person name="Dean D.R."/>
            <person name="Dixon R."/>
            <person name="Wood D."/>
        </authorList>
    </citation>
    <scope>NUCLEOTIDE SEQUENCE [LARGE SCALE GENOMIC DNA]</scope>
    <source>
        <strain>DJ / ATCC BAA-1303</strain>
    </source>
</reference>
<protein>
    <recommendedName>
        <fullName evidence="1">Iron-sulfur cluster assembly protein CyaY</fullName>
    </recommendedName>
</protein>
<sequence length="110" mass="12386">MSLTEARFHELIDDLQQNVEDVFEDSDLDVDLENSAGVLSVRFENGSQLILSRQEPLRQLWLAARSGGFHFDYDEAGGRWICDASGDSLGELLARVTLEQIGEELEFPEL</sequence>
<dbReference type="EMBL" id="CP001157">
    <property type="protein sequence ID" value="ACO80871.1"/>
    <property type="molecule type" value="Genomic_DNA"/>
</dbReference>
<dbReference type="RefSeq" id="WP_012703233.1">
    <property type="nucleotide sequence ID" value="NC_012560.1"/>
</dbReference>
<dbReference type="SMR" id="C1DJ52"/>
<dbReference type="STRING" id="322710.Avin_47670"/>
<dbReference type="EnsemblBacteria" id="ACO80871">
    <property type="protein sequence ID" value="ACO80871"/>
    <property type="gene ID" value="Avin_47670"/>
</dbReference>
<dbReference type="GeneID" id="88187640"/>
<dbReference type="KEGG" id="avn:Avin_47670"/>
<dbReference type="eggNOG" id="COG1965">
    <property type="taxonomic scope" value="Bacteria"/>
</dbReference>
<dbReference type="HOGENOM" id="CLU_080880_3_0_6"/>
<dbReference type="OrthoDB" id="285675at2"/>
<dbReference type="Proteomes" id="UP000002424">
    <property type="component" value="Chromosome"/>
</dbReference>
<dbReference type="GO" id="GO:0005829">
    <property type="term" value="C:cytosol"/>
    <property type="evidence" value="ECO:0007669"/>
    <property type="project" value="TreeGrafter"/>
</dbReference>
<dbReference type="GO" id="GO:0008199">
    <property type="term" value="F:ferric iron binding"/>
    <property type="evidence" value="ECO:0007669"/>
    <property type="project" value="InterPro"/>
</dbReference>
<dbReference type="GO" id="GO:0008198">
    <property type="term" value="F:ferrous iron binding"/>
    <property type="evidence" value="ECO:0007669"/>
    <property type="project" value="TreeGrafter"/>
</dbReference>
<dbReference type="GO" id="GO:0016226">
    <property type="term" value="P:iron-sulfur cluster assembly"/>
    <property type="evidence" value="ECO:0007669"/>
    <property type="project" value="UniProtKB-UniRule"/>
</dbReference>
<dbReference type="CDD" id="cd00503">
    <property type="entry name" value="Frataxin"/>
    <property type="match status" value="1"/>
</dbReference>
<dbReference type="Gene3D" id="3.30.920.10">
    <property type="entry name" value="Frataxin/CyaY"/>
    <property type="match status" value="1"/>
</dbReference>
<dbReference type="HAMAP" id="MF_00142">
    <property type="entry name" value="CyaY"/>
    <property type="match status" value="1"/>
</dbReference>
<dbReference type="InterPro" id="IPR047584">
    <property type="entry name" value="CyaY"/>
</dbReference>
<dbReference type="InterPro" id="IPR002908">
    <property type="entry name" value="Frataxin/CyaY"/>
</dbReference>
<dbReference type="InterPro" id="IPR036524">
    <property type="entry name" value="Frataxin/CyaY_sf"/>
</dbReference>
<dbReference type="InterPro" id="IPR020895">
    <property type="entry name" value="Frataxin_CS"/>
</dbReference>
<dbReference type="NCBIfam" id="TIGR03421">
    <property type="entry name" value="FeS_CyaY"/>
    <property type="match status" value="1"/>
</dbReference>
<dbReference type="PANTHER" id="PTHR16821">
    <property type="entry name" value="FRATAXIN"/>
    <property type="match status" value="1"/>
</dbReference>
<dbReference type="PANTHER" id="PTHR16821:SF2">
    <property type="entry name" value="FRATAXIN, MITOCHONDRIAL"/>
    <property type="match status" value="1"/>
</dbReference>
<dbReference type="Pfam" id="PF01491">
    <property type="entry name" value="Frataxin_Cyay"/>
    <property type="match status" value="1"/>
</dbReference>
<dbReference type="SMART" id="SM01219">
    <property type="entry name" value="Frataxin_Cyay"/>
    <property type="match status" value="1"/>
</dbReference>
<dbReference type="SUPFAM" id="SSF55387">
    <property type="entry name" value="Frataxin/Nqo15-like"/>
    <property type="match status" value="1"/>
</dbReference>
<dbReference type="PROSITE" id="PS01344">
    <property type="entry name" value="FRATAXIN_1"/>
    <property type="match status" value="1"/>
</dbReference>
<dbReference type="PROSITE" id="PS50810">
    <property type="entry name" value="FRATAXIN_2"/>
    <property type="match status" value="1"/>
</dbReference>
<organism>
    <name type="scientific">Azotobacter vinelandii (strain DJ / ATCC BAA-1303)</name>
    <dbReference type="NCBI Taxonomy" id="322710"/>
    <lineage>
        <taxon>Bacteria</taxon>
        <taxon>Pseudomonadati</taxon>
        <taxon>Pseudomonadota</taxon>
        <taxon>Gammaproteobacteria</taxon>
        <taxon>Pseudomonadales</taxon>
        <taxon>Pseudomonadaceae</taxon>
        <taxon>Azotobacter</taxon>
    </lineage>
</organism>
<evidence type="ECO:0000255" key="1">
    <source>
        <dbReference type="HAMAP-Rule" id="MF_00142"/>
    </source>
</evidence>
<comment type="function">
    <text evidence="1">Involved in iron-sulfur (Fe-S) cluster assembly. May act as a regulator of Fe-S biogenesis.</text>
</comment>
<comment type="similarity">
    <text evidence="1">Belongs to the frataxin family.</text>
</comment>
<name>CYAY_AZOVD</name>
<accession>C1DJ52</accession>
<gene>
    <name evidence="1" type="primary">cyaY</name>
    <name type="ordered locus">Avin_47670</name>
</gene>
<keyword id="KW-0408">Iron</keyword>
<keyword id="KW-0479">Metal-binding</keyword>